<comment type="function">
    <text evidence="1">Involved in cell fusion during mating by stabilizing the plasma membrane fusion event.</text>
</comment>
<comment type="subcellular location">
    <subcellularLocation>
        <location evidence="1">Cell membrane</location>
        <topology evidence="1">Multi-pass membrane protein</topology>
    </subcellularLocation>
</comment>
<comment type="similarity">
    <text evidence="3">Belongs to the PRM1 family.</text>
</comment>
<proteinExistence type="inferred from homology"/>
<organism>
    <name type="scientific">Meyerozyma guilliermondii (strain ATCC 6260 / CBS 566 / DSM 6381 / JCM 1539 / NBRC 10279 / NRRL Y-324)</name>
    <name type="common">Yeast</name>
    <name type="synonym">Candida guilliermondii</name>
    <dbReference type="NCBI Taxonomy" id="294746"/>
    <lineage>
        <taxon>Eukaryota</taxon>
        <taxon>Fungi</taxon>
        <taxon>Dikarya</taxon>
        <taxon>Ascomycota</taxon>
        <taxon>Saccharomycotina</taxon>
        <taxon>Pichiomycetes</taxon>
        <taxon>Debaryomycetaceae</taxon>
        <taxon>Meyerozyma</taxon>
    </lineage>
</organism>
<protein>
    <recommendedName>
        <fullName>Plasma membrane fusion protein PRM1</fullName>
    </recommendedName>
</protein>
<name>PRM1_PICGU</name>
<reference key="1">
    <citation type="journal article" date="2009" name="Nature">
        <title>Evolution of pathogenicity and sexual reproduction in eight Candida genomes.</title>
        <authorList>
            <person name="Butler G."/>
            <person name="Rasmussen M.D."/>
            <person name="Lin M.F."/>
            <person name="Santos M.A.S."/>
            <person name="Sakthikumar S."/>
            <person name="Munro C.A."/>
            <person name="Rheinbay E."/>
            <person name="Grabherr M."/>
            <person name="Forche A."/>
            <person name="Reedy J.L."/>
            <person name="Agrafioti I."/>
            <person name="Arnaud M.B."/>
            <person name="Bates S."/>
            <person name="Brown A.J.P."/>
            <person name="Brunke S."/>
            <person name="Costanzo M.C."/>
            <person name="Fitzpatrick D.A."/>
            <person name="de Groot P.W.J."/>
            <person name="Harris D."/>
            <person name="Hoyer L.L."/>
            <person name="Hube B."/>
            <person name="Klis F.M."/>
            <person name="Kodira C."/>
            <person name="Lennard N."/>
            <person name="Logue M.E."/>
            <person name="Martin R."/>
            <person name="Neiman A.M."/>
            <person name="Nikolaou E."/>
            <person name="Quail M.A."/>
            <person name="Quinn J."/>
            <person name="Santos M.C."/>
            <person name="Schmitzberger F.F."/>
            <person name="Sherlock G."/>
            <person name="Shah P."/>
            <person name="Silverstein K.A.T."/>
            <person name="Skrzypek M.S."/>
            <person name="Soll D."/>
            <person name="Staggs R."/>
            <person name="Stansfield I."/>
            <person name="Stumpf M.P.H."/>
            <person name="Sudbery P.E."/>
            <person name="Srikantha T."/>
            <person name="Zeng Q."/>
            <person name="Berman J."/>
            <person name="Berriman M."/>
            <person name="Heitman J."/>
            <person name="Gow N.A.R."/>
            <person name="Lorenz M.C."/>
            <person name="Birren B.W."/>
            <person name="Kellis M."/>
            <person name="Cuomo C.A."/>
        </authorList>
    </citation>
    <scope>NUCLEOTIDE SEQUENCE [LARGE SCALE GENOMIC DNA]</scope>
    <source>
        <strain>ATCC 6260 / CBS 566 / DSM 6381 / JCM 1539 / NBRC 10279 / NRRL Y-324</strain>
    </source>
</reference>
<accession>A5DJ60</accession>
<keyword id="KW-1003">Cell membrane</keyword>
<keyword id="KW-0184">Conjugation</keyword>
<keyword id="KW-0325">Glycoprotein</keyword>
<keyword id="KW-0472">Membrane</keyword>
<keyword id="KW-1185">Reference proteome</keyword>
<keyword id="KW-0812">Transmembrane</keyword>
<keyword id="KW-1133">Transmembrane helix</keyword>
<evidence type="ECO:0000250" key="1"/>
<evidence type="ECO:0000255" key="2"/>
<evidence type="ECO:0000305" key="3"/>
<sequence length="630" mass="70527">MFHFFLKYHFFLFISMAPRYYLTLSQVCSQVWCNKYTIAFVLLAVKVYTFSLILRSTLDHLMDLVDTINVSLDQFASTATNFPAQLTQLTNKLIAEQLQQLKSNFKLSLLLLVSVIRALIGFYMEIFLGTFTCLLDAAAQASVNFALDSAQATLKCLNTTIVSVTSEVESGLESISSFIENSINTVSSLFTNGKKPSVTSINLSLGKLRNLQIPGSVTNELDSFRLNLDEFDNLKNSTINLLTAPLTHFDKNVSGSDLFGPIDSSKMVVANYGPSAAKNVTFDLTEVKNSIVDFKNDAAKIASIMIIVLASLSVIAMIALVFVERRNFVKRDIFVISVREKSSPLAIGNALETYQNRTIYYMAKLKVNPRYYWICNYLTSKYAMVVIIIGLVGVISFTLQYRLLLSVKNKLKNLIDTVSSPEQTKQLQASLSQYTAQTNNYIEAQSKALNQNLLGWYMKASTNVNDTLTDILHQINSTIHTVTGNTALSKPFEVVVYCVIGRKIVAVTKGITWLNEHLVIDLPQLPVDLFKDVTEAAPLRYGKQLETQMVKATNSLEHMLFIELYVALGFVGIWVIFIVMGIIFMFFPKKRTIGSPKLLTKTEKEEYIFPLSSFNTSSSVYSTLNDRPIS</sequence>
<dbReference type="EMBL" id="CH408158">
    <property type="protein sequence ID" value="EDK39213.2"/>
    <property type="molecule type" value="Genomic_DNA"/>
</dbReference>
<dbReference type="RefSeq" id="XP_001483930.1">
    <property type="nucleotide sequence ID" value="XM_001483880.1"/>
</dbReference>
<dbReference type="FunCoup" id="A5DJ60">
    <property type="interactions" value="42"/>
</dbReference>
<dbReference type="STRING" id="294746.A5DJ60"/>
<dbReference type="GlyCosmos" id="A5DJ60">
    <property type="glycosylation" value="7 sites, No reported glycans"/>
</dbReference>
<dbReference type="GeneID" id="5125809"/>
<dbReference type="KEGG" id="pgu:PGUG_03311"/>
<dbReference type="VEuPathDB" id="FungiDB:PGUG_03311"/>
<dbReference type="eggNOG" id="ENOG502QRP5">
    <property type="taxonomic scope" value="Eukaryota"/>
</dbReference>
<dbReference type="HOGENOM" id="CLU_010191_1_0_1"/>
<dbReference type="InParanoid" id="A5DJ60"/>
<dbReference type="OMA" id="NVFGWVN"/>
<dbReference type="OrthoDB" id="5356111at2759"/>
<dbReference type="Proteomes" id="UP000001997">
    <property type="component" value="Unassembled WGS sequence"/>
</dbReference>
<dbReference type="GO" id="GO:0043332">
    <property type="term" value="C:mating projection tip"/>
    <property type="evidence" value="ECO:0007669"/>
    <property type="project" value="InterPro"/>
</dbReference>
<dbReference type="GO" id="GO:0005886">
    <property type="term" value="C:plasma membrane"/>
    <property type="evidence" value="ECO:0007669"/>
    <property type="project" value="UniProtKB-SubCell"/>
</dbReference>
<dbReference type="GO" id="GO:0032220">
    <property type="term" value="P:plasma membrane fusion involved in cytogamy"/>
    <property type="evidence" value="ECO:0007669"/>
    <property type="project" value="TreeGrafter"/>
</dbReference>
<dbReference type="InterPro" id="IPR026777">
    <property type="entry name" value="PRM1"/>
</dbReference>
<dbReference type="PANTHER" id="PTHR31030">
    <property type="entry name" value="PLASMA MEMBRANE FUSION PROTEIN PRM1"/>
    <property type="match status" value="1"/>
</dbReference>
<dbReference type="PANTHER" id="PTHR31030:SF1">
    <property type="entry name" value="PLASMA MEMBRANE FUSION PROTEIN PRM1"/>
    <property type="match status" value="1"/>
</dbReference>
<feature type="chain" id="PRO_0000337287" description="Plasma membrane fusion protein PRM1">
    <location>
        <begin position="1"/>
        <end position="630"/>
    </location>
</feature>
<feature type="topological domain" description="Extracellular" evidence="1">
    <location>
        <begin position="1"/>
        <end position="37"/>
    </location>
</feature>
<feature type="transmembrane region" description="Helical" evidence="2">
    <location>
        <begin position="38"/>
        <end position="58"/>
    </location>
</feature>
<feature type="topological domain" description="Cytoplasmic" evidence="1">
    <location>
        <begin position="59"/>
        <end position="108"/>
    </location>
</feature>
<feature type="transmembrane region" description="Helical" evidence="2">
    <location>
        <begin position="109"/>
        <end position="129"/>
    </location>
</feature>
<feature type="topological domain" description="Extracellular" evidence="1">
    <location>
        <begin position="130"/>
        <end position="302"/>
    </location>
</feature>
<feature type="transmembrane region" description="Helical" evidence="2">
    <location>
        <begin position="303"/>
        <end position="323"/>
    </location>
</feature>
<feature type="topological domain" description="Cytoplasmic" evidence="1">
    <location>
        <begin position="324"/>
        <end position="376"/>
    </location>
</feature>
<feature type="transmembrane region" description="Helical" evidence="2">
    <location>
        <begin position="377"/>
        <end position="397"/>
    </location>
</feature>
<feature type="topological domain" description="Extracellular" evidence="1">
    <location>
        <begin position="398"/>
        <end position="566"/>
    </location>
</feature>
<feature type="transmembrane region" description="Helical" evidence="2">
    <location>
        <begin position="567"/>
        <end position="587"/>
    </location>
</feature>
<feature type="topological domain" description="Cytoplasmic" evidence="1">
    <location>
        <begin position="588"/>
        <end position="630"/>
    </location>
</feature>
<feature type="glycosylation site" description="N-linked (GlcNAc...) asparagine" evidence="2">
    <location>
        <position position="158"/>
    </location>
</feature>
<feature type="glycosylation site" description="N-linked (GlcNAc...) asparagine" evidence="2">
    <location>
        <position position="202"/>
    </location>
</feature>
<feature type="glycosylation site" description="N-linked (GlcNAc...) asparagine" evidence="2">
    <location>
        <position position="236"/>
    </location>
</feature>
<feature type="glycosylation site" description="N-linked (GlcNAc...) asparagine" evidence="2">
    <location>
        <position position="252"/>
    </location>
</feature>
<feature type="glycosylation site" description="N-linked (GlcNAc...) asparagine" evidence="2">
    <location>
        <position position="279"/>
    </location>
</feature>
<feature type="glycosylation site" description="N-linked (GlcNAc...) asparagine" evidence="2">
    <location>
        <position position="465"/>
    </location>
</feature>
<feature type="glycosylation site" description="N-linked (GlcNAc...) asparagine" evidence="2">
    <location>
        <position position="476"/>
    </location>
</feature>
<gene>
    <name type="primary">PRM1</name>
    <name type="ORF">PGUG_03311</name>
</gene>